<protein>
    <recommendedName>
        <fullName>Glutamate--isopropylamine ligase</fullName>
        <ecNumber>6.3.2.-</ecNumber>
    </recommendedName>
    <alternativeName>
        <fullName>Gamma-glutamylisopropylamide synthetase</fullName>
        <shortName>GIPA synthetase</shortName>
    </alternativeName>
</protein>
<name>IPUC_PSESP</name>
<keyword id="KW-0067">ATP-binding</keyword>
<keyword id="KW-0436">Ligase</keyword>
<keyword id="KW-0547">Nucleotide-binding</keyword>
<evidence type="ECO:0000255" key="1">
    <source>
        <dbReference type="PROSITE-ProRule" id="PRU01330"/>
    </source>
</evidence>
<evidence type="ECO:0000255" key="2">
    <source>
        <dbReference type="PROSITE-ProRule" id="PRU01331"/>
    </source>
</evidence>
<evidence type="ECO:0000269" key="3">
    <source>
    </source>
</evidence>
<evidence type="ECO:0000305" key="4"/>
<dbReference type="EC" id="6.3.2.-"/>
<dbReference type="EMBL" id="AJ311159">
    <property type="protein sequence ID" value="CAC81335.1"/>
    <property type="molecule type" value="Genomic_DNA"/>
</dbReference>
<dbReference type="SMR" id="Q936T0"/>
<dbReference type="BioCyc" id="MetaCyc:MONOMER-13561"/>
<dbReference type="GO" id="GO:0016881">
    <property type="term" value="F:acid-amino acid ligase activity"/>
    <property type="evidence" value="ECO:0000314"/>
    <property type="project" value="UniProtKB"/>
</dbReference>
<dbReference type="GO" id="GO:0005524">
    <property type="term" value="F:ATP binding"/>
    <property type="evidence" value="ECO:0007669"/>
    <property type="project" value="UniProtKB-KW"/>
</dbReference>
<dbReference type="GO" id="GO:0004356">
    <property type="term" value="F:glutamine synthetase activity"/>
    <property type="evidence" value="ECO:0007669"/>
    <property type="project" value="InterPro"/>
</dbReference>
<dbReference type="GO" id="GO:0019624">
    <property type="term" value="P:atrazine catabolic process to isopropylamine"/>
    <property type="evidence" value="ECO:0000315"/>
    <property type="project" value="UniProtKB"/>
</dbReference>
<dbReference type="GO" id="GO:0006542">
    <property type="term" value="P:glutamine biosynthetic process"/>
    <property type="evidence" value="ECO:0007669"/>
    <property type="project" value="InterPro"/>
</dbReference>
<dbReference type="FunFam" id="3.30.590.10:FF:000005">
    <property type="entry name" value="Probable glutamine synthetase"/>
    <property type="match status" value="1"/>
</dbReference>
<dbReference type="Gene3D" id="3.10.20.70">
    <property type="entry name" value="Glutamine synthetase, N-terminal domain"/>
    <property type="match status" value="1"/>
</dbReference>
<dbReference type="Gene3D" id="3.30.590.10">
    <property type="entry name" value="Glutamine synthetase/guanido kinase, catalytic domain"/>
    <property type="match status" value="1"/>
</dbReference>
<dbReference type="InterPro" id="IPR008147">
    <property type="entry name" value="Gln_synt_N"/>
</dbReference>
<dbReference type="InterPro" id="IPR036651">
    <property type="entry name" value="Gln_synt_N_sf"/>
</dbReference>
<dbReference type="InterPro" id="IPR014746">
    <property type="entry name" value="Gln_synth/guanido_kin_cat_dom"/>
</dbReference>
<dbReference type="InterPro" id="IPR008146">
    <property type="entry name" value="Gln_synth_cat_dom"/>
</dbReference>
<dbReference type="PANTHER" id="PTHR43785">
    <property type="entry name" value="GAMMA-GLUTAMYLPUTRESCINE SYNTHETASE"/>
    <property type="match status" value="1"/>
</dbReference>
<dbReference type="PANTHER" id="PTHR43785:SF12">
    <property type="entry name" value="TYPE-1 GLUTAMINE SYNTHETASE 2"/>
    <property type="match status" value="1"/>
</dbReference>
<dbReference type="Pfam" id="PF00120">
    <property type="entry name" value="Gln-synt_C"/>
    <property type="match status" value="1"/>
</dbReference>
<dbReference type="SMART" id="SM01230">
    <property type="entry name" value="Gln-synt_C"/>
    <property type="match status" value="1"/>
</dbReference>
<dbReference type="SUPFAM" id="SSF54368">
    <property type="entry name" value="Glutamine synthetase, N-terminal domain"/>
    <property type="match status" value="1"/>
</dbReference>
<dbReference type="SUPFAM" id="SSF55931">
    <property type="entry name" value="Glutamine synthetase/guanido kinase"/>
    <property type="match status" value="1"/>
</dbReference>
<dbReference type="PROSITE" id="PS51986">
    <property type="entry name" value="GS_BETA_GRASP"/>
    <property type="match status" value="1"/>
</dbReference>
<dbReference type="PROSITE" id="PS51987">
    <property type="entry name" value="GS_CATALYTIC"/>
    <property type="match status" value="1"/>
</dbReference>
<sequence>MSEENKKQILKVRDFIEKHNIDTIRLGAVDIDGVWRGKQVGAEYFLNKAALDGTQISNILFGWDVADHLVDGLEFTGWDSGYPDIALIPDLSTLSLVPWQEKTASVLCDIQHLNGEPLNLSPRNLLRKAIEKAEQLGYKCYAAYEFEFYLLNDSIASISADQWRSINPVEKSGHCYSMLHHSSSSDIMGEVRKYMRDAGIVLEATNSEHGPGQYEINIKYDDALKAADDAIFVKNGIKEIAAKHGMTATFMAKPSAEWSGSSGHVHMSLSDLAGTPVFANPENPGALSEVGYNFLAGMVALAREMSAIYLPNINSYKRTAGASWAGGNSSWGFDNRTVSHRAITSAGSAARVENRIPGADTNPYLVIAASLLSGLYGIENKLKPKDPILGNAYKVSPELARPLAASLEEAAGIFRESEMARVIFPNEFVEHYAQMKVWEIKQSNSFVNNWELARYLDII</sequence>
<accession>Q936T0</accession>
<reference key="1">
    <citation type="journal article" date="2002" name="Appl. Environ. Microbiol.">
        <title>Transformation of isopropylamine to L-alaninol by Pseudomonas sp. strain KIE171 involves N-glutamylated intermediates.</title>
        <authorList>
            <person name="de Azevedo Waesch S.I."/>
            <person name="van der Ploeg J.R."/>
            <person name="Maire T."/>
            <person name="Lebreton A."/>
            <person name="Kiener A."/>
            <person name="Leisinger T."/>
        </authorList>
    </citation>
    <scope>NUCLEOTIDE SEQUENCE [GENOMIC DNA]</scope>
    <scope>FUNCTION</scope>
    <scope>CATALYTIC ACTIVITY</scope>
    <scope>DISRUPTION PHENOTYPE</scope>
    <scope>SUBSTRATE SPECIFICITY</scope>
    <source>
        <strain>KIE171</strain>
    </source>
</reference>
<feature type="chain" id="PRO_0000428935" description="Glutamate--isopropylamine ligase">
    <location>
        <begin position="1"/>
        <end position="459"/>
    </location>
</feature>
<feature type="domain" description="GS beta-grasp" evidence="1">
    <location>
        <begin position="19"/>
        <end position="115"/>
    </location>
</feature>
<feature type="domain" description="GS catalytic" evidence="2">
    <location>
        <begin position="122"/>
        <end position="459"/>
    </location>
</feature>
<gene>
    <name type="primary">ipuC</name>
</gene>
<organism>
    <name type="scientific">Pseudomonas sp</name>
    <dbReference type="NCBI Taxonomy" id="306"/>
    <lineage>
        <taxon>Bacteria</taxon>
        <taxon>Pseudomonadati</taxon>
        <taxon>Pseudomonadota</taxon>
        <taxon>Gammaproteobacteria</taxon>
        <taxon>Pseudomonadales</taxon>
        <taxon>Pseudomonadaceae</taxon>
        <taxon>Pseudomonas</taxon>
    </lineage>
</organism>
<comment type="function">
    <text evidence="3">Involved in the degradation of isopropylamine, which is a constituent of the herbicides atrazine. Catalyzes the ATP-dependent formation of gamma-glutamyl-isopropylamide from isopropylamine and L-glutamate. It can also use aminoalkanes, amino-alcohols (L-alaninol and D-alaninol) and amino-esters as substrates.</text>
</comment>
<comment type="catalytic activity">
    <reaction evidence="3">
        <text>isopropylamine + L-glutamate + ATP = gamma-L-glutamyl-isopropylamide + ADP + phosphate + H(+)</text>
        <dbReference type="Rhea" id="RHEA:21048"/>
        <dbReference type="ChEBI" id="CHEBI:15378"/>
        <dbReference type="ChEBI" id="CHEBI:29985"/>
        <dbReference type="ChEBI" id="CHEBI:30616"/>
        <dbReference type="ChEBI" id="CHEBI:43474"/>
        <dbReference type="ChEBI" id="CHEBI:57492"/>
        <dbReference type="ChEBI" id="CHEBI:85420"/>
        <dbReference type="ChEBI" id="CHEBI:456216"/>
    </reaction>
</comment>
<comment type="disruption phenotype">
    <text evidence="3">Cells lacking this gene are unable to transform isopropylamine to L-alaninol.</text>
</comment>
<comment type="similarity">
    <text evidence="4">Belongs to the glutamine synthetase family.</text>
</comment>
<proteinExistence type="evidence at protein level"/>